<reference key="1">
    <citation type="journal article" date="2007" name="Mol. Biol. Evol.">
        <title>Gene relocations within chloroplast genomes of Jasminum and Menodora (Oleaceae) are due to multiple, overlapping inversions.</title>
        <authorList>
            <person name="Lee H.-L."/>
            <person name="Jansen R.K."/>
            <person name="Chumley T.W."/>
            <person name="Kim K.-J."/>
        </authorList>
    </citation>
    <scope>NUCLEOTIDE SEQUENCE [LARGE SCALE GENOMIC DNA]</scope>
</reference>
<accession>Q06RC9</accession>
<feature type="chain" id="PRO_0000276024" description="Photosystem I reaction center subunit VIII">
    <location>
        <begin position="1"/>
        <end position="36"/>
    </location>
</feature>
<feature type="transmembrane region" description="Helical" evidence="1">
    <location>
        <begin position="8"/>
        <end position="28"/>
    </location>
</feature>
<sequence length="36" mass="3997">MTTFHFPSIFVPLVGLVFPAIAIASLFLHVQKNKIV</sequence>
<organism>
    <name type="scientific">Jasminum nudiflorum</name>
    <name type="common">Winter jasmine</name>
    <dbReference type="NCBI Taxonomy" id="126431"/>
    <lineage>
        <taxon>Eukaryota</taxon>
        <taxon>Viridiplantae</taxon>
        <taxon>Streptophyta</taxon>
        <taxon>Embryophyta</taxon>
        <taxon>Tracheophyta</taxon>
        <taxon>Spermatophyta</taxon>
        <taxon>Magnoliopsida</taxon>
        <taxon>eudicotyledons</taxon>
        <taxon>Gunneridae</taxon>
        <taxon>Pentapetalae</taxon>
        <taxon>asterids</taxon>
        <taxon>lamiids</taxon>
        <taxon>Lamiales</taxon>
        <taxon>Oleaceae</taxon>
        <taxon>Jasmineae</taxon>
        <taxon>Jasminum</taxon>
    </lineage>
</organism>
<proteinExistence type="inferred from homology"/>
<keyword id="KW-0150">Chloroplast</keyword>
<keyword id="KW-0472">Membrane</keyword>
<keyword id="KW-0602">Photosynthesis</keyword>
<keyword id="KW-0603">Photosystem I</keyword>
<keyword id="KW-0934">Plastid</keyword>
<keyword id="KW-0793">Thylakoid</keyword>
<keyword id="KW-0812">Transmembrane</keyword>
<keyword id="KW-1133">Transmembrane helix</keyword>
<evidence type="ECO:0000255" key="1">
    <source>
        <dbReference type="HAMAP-Rule" id="MF_00431"/>
    </source>
</evidence>
<protein>
    <recommendedName>
        <fullName evidence="1">Photosystem I reaction center subunit VIII</fullName>
        <shortName evidence="1">PSI-I</shortName>
    </recommendedName>
</protein>
<comment type="function">
    <text evidence="1">May help in the organization of the PsaL subunit.</text>
</comment>
<comment type="subcellular location">
    <subcellularLocation>
        <location evidence="1">Plastid</location>
        <location evidence="1">Chloroplast thylakoid membrane</location>
        <topology evidence="1">Single-pass membrane protein</topology>
    </subcellularLocation>
</comment>
<comment type="similarity">
    <text evidence="1">Belongs to the PsaI family.</text>
</comment>
<geneLocation type="chloroplast"/>
<name>PSAI_JASNU</name>
<gene>
    <name evidence="1" type="primary">psaI</name>
    <name type="ORF">JNC0463</name>
</gene>
<dbReference type="EMBL" id="DQ673255">
    <property type="protein sequence ID" value="ABG74630.1"/>
    <property type="molecule type" value="Genomic_DNA"/>
</dbReference>
<dbReference type="RefSeq" id="YP_778492.1">
    <property type="nucleotide sequence ID" value="NC_008407.1"/>
</dbReference>
<dbReference type="SMR" id="Q06RC9"/>
<dbReference type="GeneID" id="4319825"/>
<dbReference type="GO" id="GO:0009535">
    <property type="term" value="C:chloroplast thylakoid membrane"/>
    <property type="evidence" value="ECO:0007669"/>
    <property type="project" value="UniProtKB-SubCell"/>
</dbReference>
<dbReference type="GO" id="GO:0009522">
    <property type="term" value="C:photosystem I"/>
    <property type="evidence" value="ECO:0007669"/>
    <property type="project" value="UniProtKB-KW"/>
</dbReference>
<dbReference type="GO" id="GO:0015979">
    <property type="term" value="P:photosynthesis"/>
    <property type="evidence" value="ECO:0007669"/>
    <property type="project" value="UniProtKB-UniRule"/>
</dbReference>
<dbReference type="HAMAP" id="MF_00431">
    <property type="entry name" value="PSI_PsaI"/>
    <property type="match status" value="1"/>
</dbReference>
<dbReference type="InterPro" id="IPR001302">
    <property type="entry name" value="PSI_PsaI"/>
</dbReference>
<dbReference type="InterPro" id="IPR036357">
    <property type="entry name" value="PSI_PsaI_sf"/>
</dbReference>
<dbReference type="NCBIfam" id="TIGR03052">
    <property type="entry name" value="PS_I_psaI"/>
    <property type="match status" value="1"/>
</dbReference>
<dbReference type="PANTHER" id="PTHR35775">
    <property type="match status" value="1"/>
</dbReference>
<dbReference type="PANTHER" id="PTHR35775:SF2">
    <property type="entry name" value="PHOTOSYSTEM I REACTION CENTER SUBUNIT VIII"/>
    <property type="match status" value="1"/>
</dbReference>
<dbReference type="Pfam" id="PF00796">
    <property type="entry name" value="PSI_8"/>
    <property type="match status" value="1"/>
</dbReference>
<dbReference type="SUPFAM" id="SSF81540">
    <property type="entry name" value="Subunit VIII of photosystem I reaction centre, PsaI"/>
    <property type="match status" value="1"/>
</dbReference>